<gene>
    <name evidence="16 20" type="primary">GPR4</name>
</gene>
<reference key="1">
    <citation type="journal article" date="1995" name="DNA Cell Biol.">
        <title>Isolation of three novel human genes encoding G protein-coupled receptors.</title>
        <authorList>
            <person name="Heiber M."/>
            <person name="Docherty J.M."/>
            <person name="Shah G."/>
            <person name="Nguyen T."/>
            <person name="Cheng R."/>
            <person name="Heng H.H.Q."/>
            <person name="Marchese A."/>
            <person name="Tsui L.-C."/>
            <person name="Shi X."/>
            <person name="George S.R."/>
            <person name="O'Dowd B.F."/>
        </authorList>
    </citation>
    <scope>NUCLEOTIDE SEQUENCE [GENOMIC DNA]</scope>
</reference>
<reference key="2">
    <citation type="journal article" date="1995" name="Genomics">
        <title>Isolation of a novel G protein-coupled receptor (GPR4) localized to chromosome 19q13.3.</title>
        <authorList>
            <person name="Mahadevan M.S."/>
            <person name="Baird S."/>
            <person name="Bailly J.E."/>
            <person name="Shutler G.G."/>
            <person name="Sabourin L.A."/>
            <person name="Tsilfidis C."/>
            <person name="Neville C.E."/>
            <person name="Narang M."/>
            <person name="Korneluk R.G."/>
        </authorList>
    </citation>
    <scope>NUCLEOTIDE SEQUENCE [GENOMIC DNA]</scope>
</reference>
<reference key="3">
    <citation type="journal article" date="1995" name="FEBS Lett.">
        <title>Cloning, sequencing and tissue distribution of two related G protein-coupled receptor candidates expressed prominently in human lung tissue.</title>
        <authorList>
            <person name="An S."/>
            <person name="Tsai C."/>
            <person name="Goetzl E.J."/>
        </authorList>
    </citation>
    <scope>NUCLEOTIDE SEQUENCE [MRNA]</scope>
</reference>
<reference key="4">
    <citation type="submission" date="2007-12" db="EMBL/GenBank/DDBJ databases">
        <authorList>
            <person name="Kaighin V.A."/>
            <person name="Martin A.L."/>
            <person name="Aronstam R.S."/>
        </authorList>
    </citation>
    <scope>NUCLEOTIDE SEQUENCE [MRNA]</scope>
    <source>
        <tissue>Brain</tissue>
    </source>
</reference>
<reference key="5">
    <citation type="journal article" date="2004" name="Nat. Genet.">
        <title>Complete sequencing and characterization of 21,243 full-length human cDNAs.</title>
        <authorList>
            <person name="Ota T."/>
            <person name="Suzuki Y."/>
            <person name="Nishikawa T."/>
            <person name="Otsuki T."/>
            <person name="Sugiyama T."/>
            <person name="Irie R."/>
            <person name="Wakamatsu A."/>
            <person name="Hayashi K."/>
            <person name="Sato H."/>
            <person name="Nagai K."/>
            <person name="Kimura K."/>
            <person name="Makita H."/>
            <person name="Sekine M."/>
            <person name="Obayashi M."/>
            <person name="Nishi T."/>
            <person name="Shibahara T."/>
            <person name="Tanaka T."/>
            <person name="Ishii S."/>
            <person name="Yamamoto J."/>
            <person name="Saito K."/>
            <person name="Kawai Y."/>
            <person name="Isono Y."/>
            <person name="Nakamura Y."/>
            <person name="Nagahari K."/>
            <person name="Murakami K."/>
            <person name="Yasuda T."/>
            <person name="Iwayanagi T."/>
            <person name="Wagatsuma M."/>
            <person name="Shiratori A."/>
            <person name="Sudo H."/>
            <person name="Hosoiri T."/>
            <person name="Kaku Y."/>
            <person name="Kodaira H."/>
            <person name="Kondo H."/>
            <person name="Sugawara M."/>
            <person name="Takahashi M."/>
            <person name="Kanda K."/>
            <person name="Yokoi T."/>
            <person name="Furuya T."/>
            <person name="Kikkawa E."/>
            <person name="Omura Y."/>
            <person name="Abe K."/>
            <person name="Kamihara K."/>
            <person name="Katsuta N."/>
            <person name="Sato K."/>
            <person name="Tanikawa M."/>
            <person name="Yamazaki M."/>
            <person name="Ninomiya K."/>
            <person name="Ishibashi T."/>
            <person name="Yamashita H."/>
            <person name="Murakawa K."/>
            <person name="Fujimori K."/>
            <person name="Tanai H."/>
            <person name="Kimata M."/>
            <person name="Watanabe M."/>
            <person name="Hiraoka S."/>
            <person name="Chiba Y."/>
            <person name="Ishida S."/>
            <person name="Ono Y."/>
            <person name="Takiguchi S."/>
            <person name="Watanabe S."/>
            <person name="Yosida M."/>
            <person name="Hotuta T."/>
            <person name="Kusano J."/>
            <person name="Kanehori K."/>
            <person name="Takahashi-Fujii A."/>
            <person name="Hara H."/>
            <person name="Tanase T.-O."/>
            <person name="Nomura Y."/>
            <person name="Togiya S."/>
            <person name="Komai F."/>
            <person name="Hara R."/>
            <person name="Takeuchi K."/>
            <person name="Arita M."/>
            <person name="Imose N."/>
            <person name="Musashino K."/>
            <person name="Yuuki H."/>
            <person name="Oshima A."/>
            <person name="Sasaki N."/>
            <person name="Aotsuka S."/>
            <person name="Yoshikawa Y."/>
            <person name="Matsunawa H."/>
            <person name="Ichihara T."/>
            <person name="Shiohata N."/>
            <person name="Sano S."/>
            <person name="Moriya S."/>
            <person name="Momiyama H."/>
            <person name="Satoh N."/>
            <person name="Takami S."/>
            <person name="Terashima Y."/>
            <person name="Suzuki O."/>
            <person name="Nakagawa S."/>
            <person name="Senoh A."/>
            <person name="Mizoguchi H."/>
            <person name="Goto Y."/>
            <person name="Shimizu F."/>
            <person name="Wakebe H."/>
            <person name="Hishigaki H."/>
            <person name="Watanabe T."/>
            <person name="Sugiyama A."/>
            <person name="Takemoto M."/>
            <person name="Kawakami B."/>
            <person name="Yamazaki M."/>
            <person name="Watanabe K."/>
            <person name="Kumagai A."/>
            <person name="Itakura S."/>
            <person name="Fukuzumi Y."/>
            <person name="Fujimori Y."/>
            <person name="Komiyama M."/>
            <person name="Tashiro H."/>
            <person name="Tanigami A."/>
            <person name="Fujiwara T."/>
            <person name="Ono T."/>
            <person name="Yamada K."/>
            <person name="Fujii Y."/>
            <person name="Ozaki K."/>
            <person name="Hirao M."/>
            <person name="Ohmori Y."/>
            <person name="Kawabata A."/>
            <person name="Hikiji T."/>
            <person name="Kobatake N."/>
            <person name="Inagaki H."/>
            <person name="Ikema Y."/>
            <person name="Okamoto S."/>
            <person name="Okitani R."/>
            <person name="Kawakami T."/>
            <person name="Noguchi S."/>
            <person name="Itoh T."/>
            <person name="Shigeta K."/>
            <person name="Senba T."/>
            <person name="Matsumura K."/>
            <person name="Nakajima Y."/>
            <person name="Mizuno T."/>
            <person name="Morinaga M."/>
            <person name="Sasaki M."/>
            <person name="Togashi T."/>
            <person name="Oyama M."/>
            <person name="Hata H."/>
            <person name="Watanabe M."/>
            <person name="Komatsu T."/>
            <person name="Mizushima-Sugano J."/>
            <person name="Satoh T."/>
            <person name="Shirai Y."/>
            <person name="Takahashi Y."/>
            <person name="Nakagawa K."/>
            <person name="Okumura K."/>
            <person name="Nagase T."/>
            <person name="Nomura N."/>
            <person name="Kikuchi H."/>
            <person name="Masuho Y."/>
            <person name="Yamashita R."/>
            <person name="Nakai K."/>
            <person name="Yada T."/>
            <person name="Nakamura Y."/>
            <person name="Ohara O."/>
            <person name="Isogai T."/>
            <person name="Sugano S."/>
        </authorList>
    </citation>
    <scope>NUCLEOTIDE SEQUENCE [LARGE SCALE MRNA]</scope>
    <source>
        <tissue>Lung</tissue>
    </source>
</reference>
<reference key="6">
    <citation type="journal article" date="2004" name="Nature">
        <title>The DNA sequence and biology of human chromosome 19.</title>
        <authorList>
            <person name="Grimwood J."/>
            <person name="Gordon L.A."/>
            <person name="Olsen A.S."/>
            <person name="Terry A."/>
            <person name="Schmutz J."/>
            <person name="Lamerdin J.E."/>
            <person name="Hellsten U."/>
            <person name="Goodstein D."/>
            <person name="Couronne O."/>
            <person name="Tran-Gyamfi M."/>
            <person name="Aerts A."/>
            <person name="Altherr M."/>
            <person name="Ashworth L."/>
            <person name="Bajorek E."/>
            <person name="Black S."/>
            <person name="Branscomb E."/>
            <person name="Caenepeel S."/>
            <person name="Carrano A.V."/>
            <person name="Caoile C."/>
            <person name="Chan Y.M."/>
            <person name="Christensen M."/>
            <person name="Cleland C.A."/>
            <person name="Copeland A."/>
            <person name="Dalin E."/>
            <person name="Dehal P."/>
            <person name="Denys M."/>
            <person name="Detter J.C."/>
            <person name="Escobar J."/>
            <person name="Flowers D."/>
            <person name="Fotopulos D."/>
            <person name="Garcia C."/>
            <person name="Georgescu A.M."/>
            <person name="Glavina T."/>
            <person name="Gomez M."/>
            <person name="Gonzales E."/>
            <person name="Groza M."/>
            <person name="Hammon N."/>
            <person name="Hawkins T."/>
            <person name="Haydu L."/>
            <person name="Ho I."/>
            <person name="Huang W."/>
            <person name="Israni S."/>
            <person name="Jett J."/>
            <person name="Kadner K."/>
            <person name="Kimball H."/>
            <person name="Kobayashi A."/>
            <person name="Larionov V."/>
            <person name="Leem S.-H."/>
            <person name="Lopez F."/>
            <person name="Lou Y."/>
            <person name="Lowry S."/>
            <person name="Malfatti S."/>
            <person name="Martinez D."/>
            <person name="McCready P.M."/>
            <person name="Medina C."/>
            <person name="Morgan J."/>
            <person name="Nelson K."/>
            <person name="Nolan M."/>
            <person name="Ovcharenko I."/>
            <person name="Pitluck S."/>
            <person name="Pollard M."/>
            <person name="Popkie A.P."/>
            <person name="Predki P."/>
            <person name="Quan G."/>
            <person name="Ramirez L."/>
            <person name="Rash S."/>
            <person name="Retterer J."/>
            <person name="Rodriguez A."/>
            <person name="Rogers S."/>
            <person name="Salamov A."/>
            <person name="Salazar A."/>
            <person name="She X."/>
            <person name="Smith D."/>
            <person name="Slezak T."/>
            <person name="Solovyev V."/>
            <person name="Thayer N."/>
            <person name="Tice H."/>
            <person name="Tsai M."/>
            <person name="Ustaszewska A."/>
            <person name="Vo N."/>
            <person name="Wagner M."/>
            <person name="Wheeler J."/>
            <person name="Wu K."/>
            <person name="Xie G."/>
            <person name="Yang J."/>
            <person name="Dubchak I."/>
            <person name="Furey T.S."/>
            <person name="DeJong P."/>
            <person name="Dickson M."/>
            <person name="Gordon D."/>
            <person name="Eichler E.E."/>
            <person name="Pennacchio L.A."/>
            <person name="Richardson P."/>
            <person name="Stubbs L."/>
            <person name="Rokhsar D.S."/>
            <person name="Myers R.M."/>
            <person name="Rubin E.M."/>
            <person name="Lucas S.M."/>
        </authorList>
    </citation>
    <scope>NUCLEOTIDE SEQUENCE [LARGE SCALE GENOMIC DNA]</scope>
</reference>
<reference key="7">
    <citation type="submission" date="2005-07" db="EMBL/GenBank/DDBJ databases">
        <authorList>
            <person name="Mural R.J."/>
            <person name="Istrail S."/>
            <person name="Sutton G.G."/>
            <person name="Florea L."/>
            <person name="Halpern A.L."/>
            <person name="Mobarry C.M."/>
            <person name="Lippert R."/>
            <person name="Walenz B."/>
            <person name="Shatkay H."/>
            <person name="Dew I."/>
            <person name="Miller J.R."/>
            <person name="Flanigan M.J."/>
            <person name="Edwards N.J."/>
            <person name="Bolanos R."/>
            <person name="Fasulo D."/>
            <person name="Halldorsson B.V."/>
            <person name="Hannenhalli S."/>
            <person name="Turner R."/>
            <person name="Yooseph S."/>
            <person name="Lu F."/>
            <person name="Nusskern D.R."/>
            <person name="Shue B.C."/>
            <person name="Zheng X.H."/>
            <person name="Zhong F."/>
            <person name="Delcher A.L."/>
            <person name="Huson D.H."/>
            <person name="Kravitz S.A."/>
            <person name="Mouchard L."/>
            <person name="Reinert K."/>
            <person name="Remington K.A."/>
            <person name="Clark A.G."/>
            <person name="Waterman M.S."/>
            <person name="Eichler E.E."/>
            <person name="Adams M.D."/>
            <person name="Hunkapiller M.W."/>
            <person name="Myers E.W."/>
            <person name="Venter J.C."/>
        </authorList>
    </citation>
    <scope>NUCLEOTIDE SEQUENCE [LARGE SCALE GENOMIC DNA]</scope>
</reference>
<reference key="8">
    <citation type="journal article" date="2004" name="Genome Res.">
        <title>The status, quality, and expansion of the NIH full-length cDNA project: the Mammalian Gene Collection (MGC).</title>
        <authorList>
            <consortium name="The MGC Project Team"/>
        </authorList>
    </citation>
    <scope>NUCLEOTIDE SEQUENCE [LARGE SCALE MRNA]</scope>
</reference>
<reference key="9">
    <citation type="journal article" date="2001" name="J. Biol. Chem.">
        <title>Sphingosylphosphorylcholine and lysophosphatidylcholine are ligands for the G protein-coupled receptor GPR4.</title>
        <authorList>
            <person name="Zhu K."/>
            <person name="Baudhuin L.M."/>
            <person name="Hong G."/>
            <person name="Williams F.S."/>
            <person name="Cristina K.L."/>
            <person name="Kabarowski J.H."/>
            <person name="Witte O.N."/>
            <person name="Xu Y."/>
        </authorList>
    </citation>
    <scope>RETRACTED PAPER</scope>
</reference>
<reference key="10">
    <citation type="journal article" date="2005" name="J. Biol. Chem.">
        <authorList>
            <person name="Zhu K."/>
            <person name="Baudhuin L.M."/>
            <person name="Hong G."/>
            <person name="Williams F.S."/>
            <person name="Cristina K.L."/>
            <person name="Kabarowski J.H."/>
            <person name="Witte O.N."/>
            <person name="Xu Y."/>
        </authorList>
    </citation>
    <scope>RETRACTION NOTICE OF PUBMED:11535583</scope>
</reference>
<reference key="11">
    <citation type="journal article" date="2003" name="Nature">
        <title>Proton-sensing G-protein-coupled receptors.</title>
        <authorList>
            <person name="Ludwig M.-G."/>
            <person name="Vanek M."/>
            <person name="Guerini D."/>
            <person name="Gasser J.A."/>
            <person name="Jones C.E."/>
            <person name="Junker U."/>
            <person name="Hofstetter H."/>
            <person name="Wolf R.M."/>
            <person name="Seuwen K."/>
        </authorList>
    </citation>
    <scope>FUNCTION</scope>
</reference>
<reference key="12">
    <citation type="journal article" date="2007" name="Cell. Signal.">
        <title>Previously postulated 'ligand-independent' signaling of GPR4 is mediated through proton-sensing mechanisms.</title>
        <authorList>
            <person name="Tobo M."/>
            <person name="Tomura H."/>
            <person name="Mogi C."/>
            <person name="Wang J.Q."/>
            <person name="Liu J.P."/>
            <person name="Komachi M."/>
            <person name="Damirin A."/>
            <person name="Kimura T."/>
            <person name="Murata N."/>
            <person name="Kurose H."/>
            <person name="Sato K."/>
            <person name="Okajima F."/>
        </authorList>
    </citation>
    <scope>FUNCTION</scope>
    <scope>SUBCELLULAR LOCATION</scope>
</reference>
<reference key="13">
    <citation type="journal article" date="2010" name="Pharmacol. Res.">
        <title>Each one of certain histidine residues in G-protein-coupled receptor GPR4 is critical for extracellular proton-induced stimulation of multiple G-protein-signaling pathways.</title>
        <authorList>
            <person name="Liu J.P."/>
            <person name="Nakakura T."/>
            <person name="Tomura H."/>
            <person name="Tobo M."/>
            <person name="Mogi C."/>
            <person name="Wang J.Q."/>
            <person name="He X.D."/>
            <person name="Takano M."/>
            <person name="Damirin A."/>
            <person name="Komachi M."/>
            <person name="Sato K."/>
            <person name="Okajima F."/>
        </authorList>
    </citation>
    <scope>MUTAGENESIS OF HIS-4; HIS-10; HIS-17; HIS-79; HIS-80; HIS-85; HIS-165 AND HIS-269</scope>
    <scope>FUNCTION</scope>
    <scope>SUBCELLULAR LOCATION</scope>
</reference>
<reference key="14">
    <citation type="journal article" date="2011" name="PLoS ONE">
        <title>Activation of GPR4 by acidosis increases endothelial cell adhesion through the cAMP/Epac pathway.</title>
        <authorList>
            <person name="Chen A."/>
            <person name="Dong L."/>
            <person name="Leffler N.R."/>
            <person name="Asch A.S."/>
            <person name="Witte O.N."/>
            <person name="Yang L.V."/>
        </authorList>
    </citation>
    <scope>MUTAGENESIS OF ARG-115</scope>
    <scope>FUNCTION</scope>
</reference>
<reference key="15">
    <citation type="journal article" date="2020" name="IScience">
        <title>The Proton-Sensing GPR4 Receptor Regulates Paracellular Gap Formation and Permeability of Vascular Endothelial Cells.</title>
        <authorList>
            <person name="Krewson E.A."/>
            <person name="Sanderlin E.J."/>
            <person name="Marie M.A."/>
            <person name="Akhtar S.N."/>
            <person name="Velcicky J."/>
            <person name="Loetscher P."/>
            <person name="Yang L.V."/>
        </authorList>
    </citation>
    <scope>FUNCTION</scope>
    <scope>MUTAGENESIS OF ARG-115</scope>
</reference>
<reference key="16">
    <citation type="journal article" date="2021" name="J. Biol. Chem.">
        <title>The evolution and mechanism of GPCR proton sensing.</title>
        <authorList>
            <person name="Rowe J.B."/>
            <person name="Kapolka N.J."/>
            <person name="Taghon G.J."/>
            <person name="Morgan W.M."/>
            <person name="Isom D.G."/>
        </authorList>
    </citation>
    <scope>FUNCTION</scope>
    <scope>DOMAIN</scope>
    <scope>MUTAGENESIS OF ASP-63; GLU-145 AND ASP-282</scope>
</reference>
<reference key="17">
    <citation type="journal article" date="2025" name="Nat. Commun.">
        <title>Cryo-EM structure of an activated GPR4-Gs signaling complex.</title>
        <authorList>
            <person name="Ma Y."/>
            <person name="Wang Y."/>
            <person name="Tang M."/>
            <person name="Weng Y."/>
            <person name="Chen Y."/>
            <person name="Xu Y."/>
            <person name="An S."/>
            <person name="Wu Y."/>
            <person name="Zhao S."/>
            <person name="Xu H."/>
            <person name="Li D."/>
            <person name="Liu M."/>
            <person name="Lu W."/>
            <person name="Ru H."/>
            <person name="Song G."/>
        </authorList>
    </citation>
    <scope>FUNCTION</scope>
    <scope>MUTAGENESIS OF GLN-45; GLU-51; ARG-115; ARG-129 AND GLU-218</scope>
</reference>
<reference evidence="21" key="18">
    <citation type="journal article" date="2025" name="Cell">
        <title>Molecular basis of proton sensing by G protein-coupled receptors.</title>
        <authorList>
            <person name="Howard M.K."/>
            <person name="Hoppe N."/>
            <person name="Huang X.P."/>
            <person name="Mitrovic D."/>
            <person name="Billesboelle C.B."/>
            <person name="Macdonald C.B."/>
            <person name="Mehrotra E."/>
            <person name="Rockefeller Grimes P."/>
            <person name="Trinidad D.D."/>
            <person name="Delemotte L."/>
            <person name="English J.G."/>
            <person name="Coyote-Maestas W."/>
            <person name="Manglik A."/>
        </authorList>
    </citation>
    <scope>STRUCTURE BY ELECTRON MICROSCOPY (2.8 ANGSTROMS) IN COMPLEX WITH GNAS</scope>
    <scope>DISULFIDE BONDS</scope>
    <scope>FUNCTION</scope>
    <scope>ACTIVITY REGULATION</scope>
    <scope>DOMAIN</scope>
    <scope>MUTAGENESIS OF GLU-145; GLU-170 AND HIS-269</scope>
</reference>
<evidence type="ECO:0000250" key="1">
    <source>
        <dbReference type="UniProtKB" id="Q8BUD0"/>
    </source>
</evidence>
<evidence type="ECO:0000255" key="2"/>
<evidence type="ECO:0000255" key="3">
    <source>
        <dbReference type="PROSITE-ProRule" id="PRU00521"/>
    </source>
</evidence>
<evidence type="ECO:0000256" key="4">
    <source>
        <dbReference type="SAM" id="MobiDB-lite"/>
    </source>
</evidence>
<evidence type="ECO:0000269" key="5">
    <source>
    </source>
</evidence>
<evidence type="ECO:0000269" key="6">
    <source>
    </source>
</evidence>
<evidence type="ECO:0000269" key="7">
    <source>
    </source>
</evidence>
<evidence type="ECO:0000269" key="8">
    <source>
    </source>
</evidence>
<evidence type="ECO:0000269" key="9">
    <source>
    </source>
</evidence>
<evidence type="ECO:0000269" key="10">
    <source>
    </source>
</evidence>
<evidence type="ECO:0000269" key="11">
    <source>
    </source>
</evidence>
<evidence type="ECO:0000269" key="12">
    <source>
    </source>
</evidence>
<evidence type="ECO:0000269" key="13">
    <source>
    </source>
</evidence>
<evidence type="ECO:0000303" key="14">
    <source>
    </source>
</evidence>
<evidence type="ECO:0000303" key="15">
    <source>
    </source>
</evidence>
<evidence type="ECO:0000303" key="16">
    <source>
    </source>
</evidence>
<evidence type="ECO:0000305" key="17"/>
<evidence type="ECO:0000305" key="18">
    <source>
    </source>
</evidence>
<evidence type="ECO:0000305" key="19">
    <source>
    </source>
</evidence>
<evidence type="ECO:0000312" key="20">
    <source>
        <dbReference type="HGNC" id="HGNC:4497"/>
    </source>
</evidence>
<evidence type="ECO:0007744" key="21">
    <source>
        <dbReference type="PDB" id="9BIP"/>
    </source>
</evidence>
<keyword id="KW-0002">3D-structure</keyword>
<keyword id="KW-1003">Cell membrane</keyword>
<keyword id="KW-1015">Disulfide bond</keyword>
<keyword id="KW-0297">G-protein coupled receptor</keyword>
<keyword id="KW-0325">Glycoprotein</keyword>
<keyword id="KW-0472">Membrane</keyword>
<keyword id="KW-0675">Receptor</keyword>
<keyword id="KW-1185">Reference proteome</keyword>
<keyword id="KW-0807">Transducer</keyword>
<keyword id="KW-0812">Transmembrane</keyword>
<keyword id="KW-1133">Transmembrane helix</keyword>
<comment type="function">
    <text evidence="1 6 7 8 9 10 11 12 13">Proton-sensing G-protein coupled receptor activated by extracellular pH, which is required to monitor pH changes and generate adaptive reactions (PubMed:12955148, PubMed:17462861, PubMed:33478938, PubMed:39753132, PubMed:39799123). Activated by an optimal pH of 6.8-7.2 (PubMed:12955148, PubMed:17462861, PubMed:39753132). Ligand binding causes a conformation change that triggers signaling via guanine nucleotide-binding proteins (G proteins) and modulates the activity of downstream effectors, such as adenylate cyclase (PubMed:39753132). GPR4 is mainly coupled to G(s) G proteins and mediates activation of adenylate cyclase activity (PubMed:12955148, PubMed:17462861, PubMed:20211729, PubMed:22110680, PubMed:39753132). May also couple with G(q) and G(12)/G(13) G proteins (PubMed:12955148, PubMed:17462861, PubMed:20211729, PubMed:22110680). Acts as a key regulator of respiratory sensitivity to CO2/H(+) in brain retrotrapezoid nucleus neurons: acts by mediating detection of protons generated by the formation of carbonic acid in the blood, an important mechanism to impulse to breathe (By similarity). Also acts as a regulator of acid secretion in the kidney collecting duct by maintaining acid-base homeostasis in the kidney (By similarity). Acidosis-induced GPR4 activation increases paracellular gap formation and permeability of vascular endothelial cells, possibly through the G(12)/G(13)/Rho GTPase signaling pathway (PubMed:32058960).</text>
</comment>
<comment type="activity regulation">
    <text evidence="12">Activated by a network of residues that connects an extracellular-facing cavity to Glu-145, a conserved charged residue buried in the transmembrane core of the receptor (PubMed:39753132). Protonation likely drives conformational changes in extracellular loop 2 (ECL2), which stabilizes movement of transmembrane 3 (TM3) and a series of rearrangements that connect the extracellular-facing cavity to Glu-145, a residue only conserved in proton-sensing G-protein coupled receptors (PubMed:39753132).</text>
</comment>
<comment type="subcellular location">
    <subcellularLocation>
        <location evidence="7 8">Cell membrane</location>
        <topology evidence="12">Multi-pass membrane protein</topology>
    </subcellularLocation>
</comment>
<comment type="domain">
    <text evidence="11 12">A multitude of proton-sensing residues, which include extracellular histidine residues (His-155, His-165 and His-269) or triad of buried acidic residues (Asp-63, Glu-145 and Asp-282), contribute to activation of the G-protein coupled receptor activity and pH sensitivity.</text>
</comment>
<comment type="similarity">
    <text evidence="3">Belongs to the G-protein coupled receptor 1 family.</text>
</comment>
<comment type="caution">
    <text evidence="5 18">Was originally thought to be a receptor for sphingosylphosphorylcholine and lysophosphatidylcholine (PubMed:11535583). However, this work has been retracted (PubMed:16498716).</text>
</comment>
<comment type="sequence caution" evidence="17">
    <conflict type="frameshift">
        <sequence resource="EMBL-CDS" id="AAA63180"/>
    </conflict>
</comment>
<name>GPR4_HUMAN</name>
<proteinExistence type="evidence at protein level"/>
<dbReference type="EMBL" id="L36148">
    <property type="protein sequence ID" value="AAA63180.1"/>
    <property type="status" value="ALT_FRAME"/>
    <property type="molecule type" value="Genomic_DNA"/>
</dbReference>
<dbReference type="EMBL" id="U21051">
    <property type="protein sequence ID" value="AAA98457.1"/>
    <property type="molecule type" value="Genomic_DNA"/>
</dbReference>
<dbReference type="EMBL" id="U35399">
    <property type="protein sequence ID" value="AAA79061.1"/>
    <property type="molecule type" value="mRNA"/>
</dbReference>
<dbReference type="EMBL" id="EU432116">
    <property type="protein sequence ID" value="ABY87915.1"/>
    <property type="molecule type" value="mRNA"/>
</dbReference>
<dbReference type="EMBL" id="AK290698">
    <property type="protein sequence ID" value="BAF83387.1"/>
    <property type="molecule type" value="mRNA"/>
</dbReference>
<dbReference type="EMBL" id="AC011480">
    <property type="status" value="NOT_ANNOTATED_CDS"/>
    <property type="molecule type" value="Genomic_DNA"/>
</dbReference>
<dbReference type="EMBL" id="CH471126">
    <property type="protein sequence ID" value="EAW57368.1"/>
    <property type="molecule type" value="Genomic_DNA"/>
</dbReference>
<dbReference type="EMBL" id="BC067535">
    <property type="protein sequence ID" value="AAH67535.1"/>
    <property type="molecule type" value="mRNA"/>
</dbReference>
<dbReference type="EMBL" id="BC067536">
    <property type="protein sequence ID" value="AAH67536.1"/>
    <property type="molecule type" value="mRNA"/>
</dbReference>
<dbReference type="CCDS" id="CCDS12669.1"/>
<dbReference type="PIR" id="A57641">
    <property type="entry name" value="A57641"/>
</dbReference>
<dbReference type="PIR" id="I53033">
    <property type="entry name" value="I53033"/>
</dbReference>
<dbReference type="PIR" id="S68207">
    <property type="entry name" value="S68207"/>
</dbReference>
<dbReference type="RefSeq" id="NP_005273.1">
    <property type="nucleotide sequence ID" value="NM_005282.3"/>
</dbReference>
<dbReference type="RefSeq" id="XP_016882096.1">
    <property type="nucleotide sequence ID" value="XM_017026607.1"/>
</dbReference>
<dbReference type="RefSeq" id="XP_016882097.1">
    <property type="nucleotide sequence ID" value="XM_017026608.1"/>
</dbReference>
<dbReference type="RefSeq" id="XP_054176558.1">
    <property type="nucleotide sequence ID" value="XM_054320583.1"/>
</dbReference>
<dbReference type="PDB" id="9BIP">
    <property type="method" value="EM"/>
    <property type="resolution" value="2.80 A"/>
    <property type="chains" value="R=1-362"/>
</dbReference>
<dbReference type="PDBsum" id="9BIP"/>
<dbReference type="EMDB" id="EMD-44597"/>
<dbReference type="SMR" id="P46093"/>
<dbReference type="BioGRID" id="109089">
    <property type="interactions" value="4"/>
</dbReference>
<dbReference type="CORUM" id="P46093"/>
<dbReference type="FunCoup" id="P46093">
    <property type="interactions" value="711"/>
</dbReference>
<dbReference type="STRING" id="9606.ENSP00000319744"/>
<dbReference type="BindingDB" id="P46093"/>
<dbReference type="ChEMBL" id="CHEMBL3638324"/>
<dbReference type="GuidetoPHARMACOLOGY" id="84"/>
<dbReference type="TCDB" id="9.A.14.13.45">
    <property type="family name" value="the g-protein-coupled receptor (gpcr) family"/>
</dbReference>
<dbReference type="GlyCosmos" id="P46093">
    <property type="glycosylation" value="2 sites, No reported glycans"/>
</dbReference>
<dbReference type="GlyGen" id="P46093">
    <property type="glycosylation" value="2 sites"/>
</dbReference>
<dbReference type="iPTMnet" id="P46093"/>
<dbReference type="PhosphoSitePlus" id="P46093"/>
<dbReference type="BioMuta" id="GPR4"/>
<dbReference type="DMDM" id="1708027"/>
<dbReference type="MassIVE" id="P46093"/>
<dbReference type="PaxDb" id="9606-ENSP00000319744"/>
<dbReference type="ProteomicsDB" id="55719"/>
<dbReference type="Antibodypedia" id="2958">
    <property type="antibodies" value="210 antibodies from 30 providers"/>
</dbReference>
<dbReference type="DNASU" id="2828"/>
<dbReference type="Ensembl" id="ENST00000323040.5">
    <property type="protein sequence ID" value="ENSP00000319744.3"/>
    <property type="gene ID" value="ENSG00000177464.5"/>
</dbReference>
<dbReference type="GeneID" id="2828"/>
<dbReference type="KEGG" id="hsa:2828"/>
<dbReference type="MANE-Select" id="ENST00000323040.5">
    <property type="protein sequence ID" value="ENSP00000319744.3"/>
    <property type="RefSeq nucleotide sequence ID" value="NM_005282.3"/>
    <property type="RefSeq protein sequence ID" value="NP_005273.1"/>
</dbReference>
<dbReference type="UCSC" id="uc002pcm.4">
    <property type="organism name" value="human"/>
</dbReference>
<dbReference type="AGR" id="HGNC:4497"/>
<dbReference type="CTD" id="2828"/>
<dbReference type="DisGeNET" id="2828"/>
<dbReference type="GeneCards" id="GPR4"/>
<dbReference type="HGNC" id="HGNC:4497">
    <property type="gene designation" value="GPR4"/>
</dbReference>
<dbReference type="HPA" id="ENSG00000177464">
    <property type="expression patterns" value="Tissue enhanced (adipose)"/>
</dbReference>
<dbReference type="MIM" id="600551">
    <property type="type" value="gene"/>
</dbReference>
<dbReference type="neXtProt" id="NX_P46093"/>
<dbReference type="OpenTargets" id="ENSG00000177464"/>
<dbReference type="PharmGKB" id="PA28886"/>
<dbReference type="VEuPathDB" id="HostDB:ENSG00000177464"/>
<dbReference type="eggNOG" id="ENOG502QS9G">
    <property type="taxonomic scope" value="Eukaryota"/>
</dbReference>
<dbReference type="GeneTree" id="ENSGT01130000278337"/>
<dbReference type="HOGENOM" id="CLU_009579_8_2_1"/>
<dbReference type="InParanoid" id="P46093"/>
<dbReference type="OMA" id="RTWEGCH"/>
<dbReference type="OrthoDB" id="8742459at2759"/>
<dbReference type="PAN-GO" id="P46093">
    <property type="GO annotations" value="4 GO annotations based on evolutionary models"/>
</dbReference>
<dbReference type="PhylomeDB" id="P46093"/>
<dbReference type="TreeFam" id="TF331803"/>
<dbReference type="PathwayCommons" id="P46093"/>
<dbReference type="Reactome" id="R-HSA-373076">
    <property type="pathway name" value="Class A/1 (Rhodopsin-like receptors)"/>
</dbReference>
<dbReference type="Reactome" id="R-HSA-416476">
    <property type="pathway name" value="G alpha (q) signalling events"/>
</dbReference>
<dbReference type="BioGRID-ORCS" id="2828">
    <property type="hits" value="10 hits in 1145 CRISPR screens"/>
</dbReference>
<dbReference type="GeneWiki" id="GPR4"/>
<dbReference type="GenomeRNAi" id="2828"/>
<dbReference type="Pharos" id="P46093">
    <property type="development level" value="Tchem"/>
</dbReference>
<dbReference type="PRO" id="PR:P46093"/>
<dbReference type="Proteomes" id="UP000005640">
    <property type="component" value="Chromosome 19"/>
</dbReference>
<dbReference type="RNAct" id="P46093">
    <property type="molecule type" value="protein"/>
</dbReference>
<dbReference type="Bgee" id="ENSG00000177464">
    <property type="expression patterns" value="Expressed in omental fat pad and 141 other cell types or tissues"/>
</dbReference>
<dbReference type="GO" id="GO:0005886">
    <property type="term" value="C:plasma membrane"/>
    <property type="evidence" value="ECO:0000314"/>
    <property type="project" value="UniProtKB"/>
</dbReference>
<dbReference type="GO" id="GO:0004930">
    <property type="term" value="F:G protein-coupled receptor activity"/>
    <property type="evidence" value="ECO:0000315"/>
    <property type="project" value="UniProtKB"/>
</dbReference>
<dbReference type="GO" id="GO:0007189">
    <property type="term" value="P:adenylate cyclase-activating G protein-coupled receptor signaling pathway"/>
    <property type="evidence" value="ECO:0000314"/>
    <property type="project" value="UniProtKB"/>
</dbReference>
<dbReference type="GO" id="GO:0060055">
    <property type="term" value="P:angiogenesis involved in wound healing"/>
    <property type="evidence" value="ECO:0007669"/>
    <property type="project" value="Ensembl"/>
</dbReference>
<dbReference type="GO" id="GO:0007186">
    <property type="term" value="P:G protein-coupled receptor signaling pathway"/>
    <property type="evidence" value="ECO:0000304"/>
    <property type="project" value="ProtInc"/>
</dbReference>
<dbReference type="GO" id="GO:0072144">
    <property type="term" value="P:glomerular mesangial cell development"/>
    <property type="evidence" value="ECO:0007669"/>
    <property type="project" value="Ensembl"/>
</dbReference>
<dbReference type="GO" id="GO:0016525">
    <property type="term" value="P:negative regulation of angiogenesis"/>
    <property type="evidence" value="ECO:0007669"/>
    <property type="project" value="Ensembl"/>
</dbReference>
<dbReference type="GO" id="GO:0007200">
    <property type="term" value="P:phospholipase C-activating G protein-coupled receptor signaling pathway"/>
    <property type="evidence" value="ECO:0000315"/>
    <property type="project" value="UniProtKB"/>
</dbReference>
<dbReference type="GO" id="GO:0050729">
    <property type="term" value="P:positive regulation of inflammatory response"/>
    <property type="evidence" value="ECO:0000250"/>
    <property type="project" value="UniProtKB"/>
</dbReference>
<dbReference type="GO" id="GO:0035025">
    <property type="term" value="P:positive regulation of Rho protein signal transduction"/>
    <property type="evidence" value="ECO:0000314"/>
    <property type="project" value="UniProtKB"/>
</dbReference>
<dbReference type="GO" id="GO:0030155">
    <property type="term" value="P:regulation of cell adhesion"/>
    <property type="evidence" value="ECO:0000314"/>
    <property type="project" value="UniProtKB"/>
</dbReference>
<dbReference type="GO" id="GO:0043114">
    <property type="term" value="P:regulation of vascular permeability"/>
    <property type="evidence" value="ECO:0000250"/>
    <property type="project" value="UniProtKB"/>
</dbReference>
<dbReference type="GO" id="GO:0010447">
    <property type="term" value="P:response to acidic pH"/>
    <property type="evidence" value="ECO:0000314"/>
    <property type="project" value="UniProtKB"/>
</dbReference>
<dbReference type="CDD" id="cd15366">
    <property type="entry name" value="7tmA_GPR4"/>
    <property type="match status" value="1"/>
</dbReference>
<dbReference type="FunFam" id="1.20.1070.10:FF:000065">
    <property type="entry name" value="G-protein coupled receptor 4"/>
    <property type="match status" value="1"/>
</dbReference>
<dbReference type="Gene3D" id="1.20.1070.10">
    <property type="entry name" value="Rhodopsin 7-helix transmembrane proteins"/>
    <property type="match status" value="1"/>
</dbReference>
<dbReference type="InterPro" id="IPR000276">
    <property type="entry name" value="GPCR_Rhodpsn"/>
</dbReference>
<dbReference type="InterPro" id="IPR017452">
    <property type="entry name" value="GPCR_Rhodpsn_7TM"/>
</dbReference>
<dbReference type="InterPro" id="IPR002276">
    <property type="entry name" value="GPR4_orph"/>
</dbReference>
<dbReference type="PANTHER" id="PTHR24234:SF10">
    <property type="entry name" value="G-PROTEIN COUPLED RECEPTOR 4"/>
    <property type="match status" value="1"/>
</dbReference>
<dbReference type="PANTHER" id="PTHR24234">
    <property type="entry name" value="LYSOPHOSPHATIDIC ACID RECEPTOR 5/SPHINGOSYLPHOSPHORYLCHOLINE RECEPTOR"/>
    <property type="match status" value="1"/>
</dbReference>
<dbReference type="Pfam" id="PF00001">
    <property type="entry name" value="7tm_1"/>
    <property type="match status" value="1"/>
</dbReference>
<dbReference type="PRINTS" id="PR00237">
    <property type="entry name" value="GPCRRHODOPSN"/>
</dbReference>
<dbReference type="PRINTS" id="PR01147">
    <property type="entry name" value="GPR4RECEPTOR"/>
</dbReference>
<dbReference type="SUPFAM" id="SSF81321">
    <property type="entry name" value="Family A G protein-coupled receptor-like"/>
    <property type="match status" value="1"/>
</dbReference>
<dbReference type="PROSITE" id="PS00237">
    <property type="entry name" value="G_PROTEIN_RECEP_F1_1"/>
    <property type="match status" value="1"/>
</dbReference>
<dbReference type="PROSITE" id="PS50262">
    <property type="entry name" value="G_PROTEIN_RECEP_F1_2"/>
    <property type="match status" value="1"/>
</dbReference>
<protein>
    <recommendedName>
        <fullName evidence="16">G-prodeshotein coupled receptor 4</fullName>
        <shortName evidence="14">hGPR4</shortName>
    </recommendedName>
    <alternativeName>
        <fullName evidence="15">G-protein coupled receptor 6C.l</fullName>
        <shortName evidence="15">GPR6C.l</shortName>
    </alternativeName>
</protein>
<accession>P46093</accession>
<accession>A8K3T3</accession>
<accession>B0M0K1</accession>
<accession>Q6NWM4</accession>
<sequence>MGNHTWEGCHVDSRVDHLFPPSLYIFVIGVGLPTNCLALWAAYRQVQQRNELGVYLMNLSIADLLYICTLPLWVDYFLHHDNWIHGPGSCKLFGFIFYTNIYISIAFLCCISVDRYLAVAHPLRFARLRRVKTAVAVSSVVWATELGANSAPLFHDELFRDRYNHTFCFEKFPMEGWVAWMNLYRVFVGFLFPWALMLLSYRGILRAVRGSVSTERQEKAKIKRLALSLIAIVLVCFAPYHVLLLSRSAIYLGRPWDCGFEERVFSAYHSSLAFTSLNCVADPILYCLVNEGARSDVAKALHNLLRFLASDKPQEMANASLTLETPLTSKRNSTAKAMTGSWAATPPSQGDQVQLKMLPPAQ</sequence>
<organism>
    <name type="scientific">Homo sapiens</name>
    <name type="common">Human</name>
    <dbReference type="NCBI Taxonomy" id="9606"/>
    <lineage>
        <taxon>Eukaryota</taxon>
        <taxon>Metazoa</taxon>
        <taxon>Chordata</taxon>
        <taxon>Craniata</taxon>
        <taxon>Vertebrata</taxon>
        <taxon>Euteleostomi</taxon>
        <taxon>Mammalia</taxon>
        <taxon>Eutheria</taxon>
        <taxon>Euarchontoglires</taxon>
        <taxon>Primates</taxon>
        <taxon>Haplorrhini</taxon>
        <taxon>Catarrhini</taxon>
        <taxon>Hominidae</taxon>
        <taxon>Homo</taxon>
    </lineage>
</organism>
<feature type="chain" id="PRO_0000069512" description="G-prodeshotein coupled receptor 4">
    <location>
        <begin position="1"/>
        <end position="362"/>
    </location>
</feature>
<feature type="topological domain" description="Extracellular" evidence="12 21">
    <location>
        <begin position="1"/>
        <end position="8"/>
    </location>
</feature>
<feature type="transmembrane region" description="Helical; Name=1" evidence="12 21">
    <location>
        <begin position="9"/>
        <end position="45"/>
    </location>
</feature>
<feature type="topological domain" description="Cytoplasmic" evidence="12 21">
    <location>
        <begin position="46"/>
        <end position="49"/>
    </location>
</feature>
<feature type="transmembrane region" description="Helical; Name=2" evidence="12 21">
    <location>
        <begin position="50"/>
        <end position="80"/>
    </location>
</feature>
<feature type="topological domain" description="Extracellular" evidence="12 21">
    <location>
        <begin position="81"/>
        <end position="85"/>
    </location>
</feature>
<feature type="transmembrane region" description="Helical; Name=3" evidence="12 21">
    <location>
        <begin position="86"/>
        <end position="121"/>
    </location>
</feature>
<feature type="topological domain" description="Cytoplasmic" evidence="12 21">
    <location>
        <begin position="122"/>
        <end position="129"/>
    </location>
</feature>
<feature type="transmembrane region" description="Helical; Name=4" evidence="12 21">
    <location>
        <begin position="130"/>
        <end position="156"/>
    </location>
</feature>
<feature type="topological domain" description="Extracellular" evidence="12 21">
    <location>
        <begin position="157"/>
        <end position="172"/>
    </location>
</feature>
<feature type="transmembrane region" description="Helical; Name=5" evidence="12 21">
    <location>
        <begin position="173"/>
        <end position="210"/>
    </location>
</feature>
<feature type="topological domain" description="Cytoplasmic" evidence="12 21">
    <location>
        <begin position="211"/>
        <end position="214"/>
    </location>
</feature>
<feature type="transmembrane region" description="Helical; Name=6" evidence="12 21">
    <location>
        <begin position="215"/>
        <end position="250"/>
    </location>
</feature>
<feature type="topological domain" description="Extracellular" evidence="12 21">
    <location>
        <begin position="251"/>
        <end position="260"/>
    </location>
</feature>
<feature type="transmembrane region" description="Helical; Name=7" evidence="12 21">
    <location>
        <begin position="261"/>
        <end position="289"/>
    </location>
</feature>
<feature type="topological domain" description="Cytoplasmic" evidence="12 21">
    <location>
        <begin position="290"/>
        <end position="362"/>
    </location>
</feature>
<feature type="region of interest" description="Extracellular loop 2 (ECL2)" evidence="12">
    <location>
        <begin position="157"/>
        <end position="172"/>
    </location>
</feature>
<feature type="region of interest" description="Disordered" evidence="4">
    <location>
        <begin position="335"/>
        <end position="362"/>
    </location>
</feature>
<feature type="site" description="Required for activation" evidence="12">
    <location>
        <position position="145"/>
    </location>
</feature>
<feature type="site" description="Proton sensing" evidence="19">
    <location>
        <position position="155"/>
    </location>
</feature>
<feature type="site" description="Proton sensing" evidence="1">
    <location>
        <position position="165"/>
    </location>
</feature>
<feature type="site" description="Proton sensing" evidence="19">
    <location>
        <position position="269"/>
    </location>
</feature>
<feature type="glycosylation site" description="N-linked (GlcNAc...) asparagine" evidence="2">
    <location>
        <position position="3"/>
    </location>
</feature>
<feature type="glycosylation site" description="N-linked (GlcNAc...) asparagine" evidence="2">
    <location>
        <position position="164"/>
    </location>
</feature>
<feature type="disulfide bond" evidence="12 21">
    <location>
        <begin position="9"/>
        <end position="258"/>
    </location>
</feature>
<feature type="disulfide bond" evidence="3 12 21">
    <location>
        <begin position="90"/>
        <end position="168"/>
    </location>
</feature>
<feature type="sequence variant" id="VAR_049390" description="In dbSNP:rs36012326.">
    <original>S</original>
    <variation>N</variation>
    <location>
        <position position="295"/>
    </location>
</feature>
<feature type="mutagenesis site" description="No effect on pH-sensing activity." evidence="8">
    <original>H</original>
    <variation>Y</variation>
    <location>
        <position position="4"/>
    </location>
</feature>
<feature type="mutagenesis site" description="No effect on pH-sensing activity." evidence="8">
    <original>H</original>
    <variation>Y</variation>
    <location>
        <position position="10"/>
    </location>
</feature>
<feature type="mutagenesis site" description="No effect on pH-sensing activity." evidence="8">
    <original>H</original>
    <variation>Y</variation>
    <location>
        <position position="17"/>
    </location>
</feature>
<feature type="mutagenesis site" description="Induces a shift of the optimal pH for activation." evidence="13">
    <original>Q</original>
    <variation>A</variation>
    <location>
        <position position="45"/>
    </location>
</feature>
<feature type="mutagenesis site" description="Induces a shift of the optimal pH for activation." evidence="13">
    <original>E</original>
    <variation>A</variation>
    <location>
        <position position="51"/>
    </location>
</feature>
<feature type="mutagenesis site" description="Impaired ability to sense protons." evidence="11">
    <original>D</original>
    <variation>N</variation>
    <location>
        <position position="63"/>
    </location>
</feature>
<feature type="mutagenesis site" description="Displays smaller cAMP, rho, PLC responses to mildly alkaline to acidic pH of 7.1 but almost the same or higher responses to severely acidic pH values of 6.5-6.2." evidence="8">
    <original>H</original>
    <variation>Y</variation>
    <location>
        <position position="79"/>
    </location>
</feature>
<feature type="mutagenesis site" description="No effect on pH-sensing activity." evidence="8">
    <original>H</original>
    <variation>Y</variation>
    <location>
        <position position="80"/>
    </location>
</feature>
<feature type="mutagenesis site" description="No effect on pH-sensing activity." evidence="8">
    <original>H</original>
    <variation>Y</variation>
    <location>
        <position position="85"/>
    </location>
</feature>
<feature type="mutagenesis site" description="Decreased proton-induced G-protein coupled receptor activity. Endothelial permeability is decreased under acid conditions." evidence="9 10 13">
    <original>R</original>
    <variation>A</variation>
    <location>
        <position position="115"/>
    </location>
</feature>
<feature type="mutagenesis site" description="Induces a shift of the optimal pH for activation." evidence="13">
    <original>R</original>
    <variation>A</variation>
    <location>
        <position position="129"/>
    </location>
</feature>
<feature type="mutagenesis site" description="Mimics the protonation state; induces a shift of the optimal pH for activation." evidence="11 12">
    <original>E</original>
    <variation>Q</variation>
    <location>
        <position position="145"/>
    </location>
</feature>
<feature type="mutagenesis site" description="Displays smaller cAMP, rho, PLC responses to mildly alkaline to acidic pH of 7.1 but almost the same or higher responses to severely acidic pH values of 6.5-6.2." evidence="8">
    <original>H</original>
    <variation>Y</variation>
    <location>
        <position position="165"/>
    </location>
</feature>
<feature type="mutagenesis site" description="Decreased proton-induced G-protein coupled receptor signaling." evidence="12">
    <original>E</original>
    <variation>A</variation>
    <location>
        <position position="170"/>
    </location>
</feature>
<feature type="mutagenesis site" description="Induces a shift of the optimal pH for activation." evidence="13">
    <original>E</original>
    <variation>A</variation>
    <location>
        <position position="218"/>
    </location>
</feature>
<feature type="mutagenesis site" description="Decreased proton-induced G-protein coupled receptor signaling." evidence="12">
    <original>H</original>
    <variation>A</variation>
    <location>
        <position position="269"/>
    </location>
</feature>
<feature type="mutagenesis site" description="Displays smaller cAMP, rho, PLC responses to mildly alkaline to acidic pH of 7.1 but almost the same or higher responses to severely acidic pH values of 6.5-6.2." evidence="8">
    <original>H</original>
    <variation>Y</variation>
    <location>
        <position position="269"/>
    </location>
</feature>
<feature type="mutagenesis site" description="Impaired ability to sense protons." evidence="11">
    <original>D</original>
    <variation>N</variation>
    <location>
        <position position="282"/>
    </location>
</feature>
<feature type="sequence conflict" description="In Ref. 3; AAA79061." evidence="17" ref="3">
    <original>M</original>
    <variation>L</variation>
    <location>
        <position position="57"/>
    </location>
</feature>
<feature type="sequence conflict" description="In Ref. 3; AAA79061." evidence="17" ref="3">
    <original>T</original>
    <variation>S</variation>
    <location>
        <position position="69"/>
    </location>
</feature>
<feature type="sequence conflict" description="In Ref. 8; AAH67535." evidence="17" ref="8">
    <original>R</original>
    <variation>C</variation>
    <location>
        <position position="130"/>
    </location>
</feature>
<feature type="sequence conflict" description="In Ref. 5; BAF83387." evidence="17" ref="5">
    <original>P</original>
    <variation>L</variation>
    <location>
        <position position="255"/>
    </location>
</feature>
<feature type="sequence conflict" description="In Ref. 3; AAA79061." evidence="17" ref="3">
    <original>A</original>
    <variation>V</variation>
    <location>
        <position position="337"/>
    </location>
</feature>